<name>Y680_XYLFT</name>
<organism>
    <name type="scientific">Xylella fastidiosa (strain Temecula1 / ATCC 700964)</name>
    <dbReference type="NCBI Taxonomy" id="183190"/>
    <lineage>
        <taxon>Bacteria</taxon>
        <taxon>Pseudomonadati</taxon>
        <taxon>Pseudomonadota</taxon>
        <taxon>Gammaproteobacteria</taxon>
        <taxon>Lysobacterales</taxon>
        <taxon>Lysobacteraceae</taxon>
        <taxon>Xylella</taxon>
    </lineage>
</organism>
<evidence type="ECO:0000255" key="1"/>
<evidence type="ECO:0000305" key="2"/>
<gene>
    <name type="ordered locus">PD_0680</name>
</gene>
<comment type="similarity">
    <text evidence="2">Belongs to the bacterial glucokinase family.</text>
</comment>
<proteinExistence type="inferred from homology"/>
<dbReference type="EMBL" id="AE009442">
    <property type="protein sequence ID" value="AAO28551.1"/>
    <property type="molecule type" value="Genomic_DNA"/>
</dbReference>
<dbReference type="RefSeq" id="WP_004089098.1">
    <property type="nucleotide sequence ID" value="NC_004556.1"/>
</dbReference>
<dbReference type="SMR" id="Q87DK2"/>
<dbReference type="KEGG" id="xft:PD_0680"/>
<dbReference type="HOGENOM" id="CLU_042582_1_0_6"/>
<dbReference type="Proteomes" id="UP000002516">
    <property type="component" value="Chromosome"/>
</dbReference>
<dbReference type="GO" id="GO:0005829">
    <property type="term" value="C:cytosol"/>
    <property type="evidence" value="ECO:0007669"/>
    <property type="project" value="TreeGrafter"/>
</dbReference>
<dbReference type="GO" id="GO:0005524">
    <property type="term" value="F:ATP binding"/>
    <property type="evidence" value="ECO:0007669"/>
    <property type="project" value="UniProtKB-KW"/>
</dbReference>
<dbReference type="GO" id="GO:0005536">
    <property type="term" value="F:D-glucose binding"/>
    <property type="evidence" value="ECO:0007669"/>
    <property type="project" value="InterPro"/>
</dbReference>
<dbReference type="GO" id="GO:0004340">
    <property type="term" value="F:glucokinase activity"/>
    <property type="evidence" value="ECO:0007669"/>
    <property type="project" value="InterPro"/>
</dbReference>
<dbReference type="GO" id="GO:0006096">
    <property type="term" value="P:glycolytic process"/>
    <property type="evidence" value="ECO:0007669"/>
    <property type="project" value="InterPro"/>
</dbReference>
<dbReference type="CDD" id="cd24008">
    <property type="entry name" value="ASKHA_NBD_GLK"/>
    <property type="match status" value="1"/>
</dbReference>
<dbReference type="Gene3D" id="3.30.420.40">
    <property type="match status" value="1"/>
</dbReference>
<dbReference type="Gene3D" id="3.40.367.20">
    <property type="match status" value="1"/>
</dbReference>
<dbReference type="InterPro" id="IPR043129">
    <property type="entry name" value="ATPase_NBD"/>
</dbReference>
<dbReference type="InterPro" id="IPR050201">
    <property type="entry name" value="Bacterial_glucokinase"/>
</dbReference>
<dbReference type="InterPro" id="IPR003836">
    <property type="entry name" value="Glucokinase"/>
</dbReference>
<dbReference type="NCBIfam" id="NF009073">
    <property type="entry name" value="PRK12408.1"/>
    <property type="match status" value="1"/>
</dbReference>
<dbReference type="PANTHER" id="PTHR47690">
    <property type="entry name" value="GLUCOKINASE"/>
    <property type="match status" value="1"/>
</dbReference>
<dbReference type="PANTHER" id="PTHR47690:SF1">
    <property type="entry name" value="GLUCOKINASE"/>
    <property type="match status" value="1"/>
</dbReference>
<dbReference type="Pfam" id="PF02685">
    <property type="entry name" value="Glucokinase"/>
    <property type="match status" value="1"/>
</dbReference>
<dbReference type="SUPFAM" id="SSF53067">
    <property type="entry name" value="Actin-like ATPase domain"/>
    <property type="match status" value="1"/>
</dbReference>
<sequence length="334" mass="35664">MIPTPTRDAPNIPSFLAADVGGTHVRVSVVAAAPTCASPPQLFDVRTYRCADYPSLSTILNDFLGTRSAVRDCVIASAGFQRSDGTVITTNLPWPLSPHRLRADLNLAEVCLVNDFEALAYATEDMEPAQLLHLTGPAKAQDGPRLLLGPGTGLGAALWIPNNGRPIVLPTEAGQAALPSTTELEMQLVRHMLNNRTHVPIEHALSGPGILNVYRALCALQSVLPQHASPDAISHAAAAGTDMLSSQTLEVFCDFLGSIVGDLVMMYGAQGGVYLAGGILPQLREPLLRSHFVERFLNKGPMGEALQHVPVRLIEHGQLGIVGAARWYLNKKAT</sequence>
<accession>Q87DK2</accession>
<feature type="chain" id="PRO_0000215150" description="Glucokinase-like protein PD_0680">
    <location>
        <begin position="1"/>
        <end position="334"/>
    </location>
</feature>
<feature type="binding site" evidence="1">
    <location>
        <begin position="18"/>
        <end position="23"/>
    </location>
    <ligand>
        <name>ATP</name>
        <dbReference type="ChEBI" id="CHEBI:30616"/>
    </ligand>
</feature>
<keyword id="KW-0067">ATP-binding</keyword>
<keyword id="KW-0418">Kinase</keyword>
<keyword id="KW-0547">Nucleotide-binding</keyword>
<keyword id="KW-1185">Reference proteome</keyword>
<keyword id="KW-0808">Transferase</keyword>
<protein>
    <recommendedName>
        <fullName>Glucokinase-like protein PD_0680</fullName>
    </recommendedName>
</protein>
<reference key="1">
    <citation type="journal article" date="2003" name="J. Bacteriol.">
        <title>Comparative analyses of the complete genome sequences of Pierce's disease and citrus variegated chlorosis strains of Xylella fastidiosa.</title>
        <authorList>
            <person name="Van Sluys M.A."/>
            <person name="de Oliveira M.C."/>
            <person name="Monteiro-Vitorello C.B."/>
            <person name="Miyaki C.Y."/>
            <person name="Furlan L.R."/>
            <person name="Camargo L.E.A."/>
            <person name="da Silva A.C.R."/>
            <person name="Moon D.H."/>
            <person name="Takita M.A."/>
            <person name="Lemos E.G.M."/>
            <person name="Machado M.A."/>
            <person name="Ferro M.I.T."/>
            <person name="da Silva F.R."/>
            <person name="Goldman M.H.S."/>
            <person name="Goldman G.H."/>
            <person name="Lemos M.V.F."/>
            <person name="El-Dorry H."/>
            <person name="Tsai S.M."/>
            <person name="Carrer H."/>
            <person name="Carraro D.M."/>
            <person name="de Oliveira R.C."/>
            <person name="Nunes L.R."/>
            <person name="Siqueira W.J."/>
            <person name="Coutinho L.L."/>
            <person name="Kimura E.T."/>
            <person name="Ferro E.S."/>
            <person name="Harakava R."/>
            <person name="Kuramae E.E."/>
            <person name="Marino C.L."/>
            <person name="Giglioti E."/>
            <person name="Abreu I.L."/>
            <person name="Alves L.M.C."/>
            <person name="do Amaral A.M."/>
            <person name="Baia G.S."/>
            <person name="Blanco S.R."/>
            <person name="Brito M.S."/>
            <person name="Cannavan F.S."/>
            <person name="Celestino A.V."/>
            <person name="da Cunha A.F."/>
            <person name="Fenille R.C."/>
            <person name="Ferro J.A."/>
            <person name="Formighieri E.F."/>
            <person name="Kishi L.T."/>
            <person name="Leoni S.G."/>
            <person name="Oliveira A.R."/>
            <person name="Rosa V.E. Jr."/>
            <person name="Sassaki F.T."/>
            <person name="Sena J.A.D."/>
            <person name="de Souza A.A."/>
            <person name="Truffi D."/>
            <person name="Tsukumo F."/>
            <person name="Yanai G.M."/>
            <person name="Zaros L.G."/>
            <person name="Civerolo E.L."/>
            <person name="Simpson A.J.G."/>
            <person name="Almeida N.F. Jr."/>
            <person name="Setubal J.C."/>
            <person name="Kitajima J.P."/>
        </authorList>
    </citation>
    <scope>NUCLEOTIDE SEQUENCE [LARGE SCALE GENOMIC DNA]</scope>
    <source>
        <strain>Temecula1 / ATCC 700964</strain>
    </source>
</reference>